<gene>
    <name evidence="1" type="primary">dsrB</name>
    <name type="ordered locus">ECIAI39_1104</name>
</gene>
<sequence length="62" mass="6946">MKVNDRVTVKTDGGPRRPGVVLAVEEFSEGTMYLVSLEDYPLGIWFFNEAGHQDGIFVEKAE</sequence>
<dbReference type="EMBL" id="CU928164">
    <property type="protein sequence ID" value="CAR17238.1"/>
    <property type="molecule type" value="Genomic_DNA"/>
</dbReference>
<dbReference type="RefSeq" id="WP_000867217.1">
    <property type="nucleotide sequence ID" value="NC_011750.1"/>
</dbReference>
<dbReference type="RefSeq" id="YP_002407116.1">
    <property type="nucleotide sequence ID" value="NC_011750.1"/>
</dbReference>
<dbReference type="SMR" id="B7NRC9"/>
<dbReference type="STRING" id="585057.ECIAI39_1104"/>
<dbReference type="GeneID" id="93775233"/>
<dbReference type="KEGG" id="ect:ECIAI39_1104"/>
<dbReference type="PATRIC" id="fig|585057.6.peg.1153"/>
<dbReference type="HOGENOM" id="CLU_189289_0_0_6"/>
<dbReference type="Proteomes" id="UP000000749">
    <property type="component" value="Chromosome"/>
</dbReference>
<dbReference type="HAMAP" id="MF_01549">
    <property type="entry name" value="DsrB"/>
    <property type="match status" value="1"/>
</dbReference>
<dbReference type="InterPro" id="IPR019717">
    <property type="entry name" value="Dextransucrase_DSRB"/>
</dbReference>
<dbReference type="NCBIfam" id="NF007981">
    <property type="entry name" value="PRK10708.1"/>
    <property type="match status" value="1"/>
</dbReference>
<dbReference type="Pfam" id="PF10781">
    <property type="entry name" value="DSRB"/>
    <property type="match status" value="1"/>
</dbReference>
<organism>
    <name type="scientific">Escherichia coli O7:K1 (strain IAI39 / ExPEC)</name>
    <dbReference type="NCBI Taxonomy" id="585057"/>
    <lineage>
        <taxon>Bacteria</taxon>
        <taxon>Pseudomonadati</taxon>
        <taxon>Pseudomonadota</taxon>
        <taxon>Gammaproteobacteria</taxon>
        <taxon>Enterobacterales</taxon>
        <taxon>Enterobacteriaceae</taxon>
        <taxon>Escherichia</taxon>
    </lineage>
</organism>
<reference key="1">
    <citation type="journal article" date="2009" name="PLoS Genet.">
        <title>Organised genome dynamics in the Escherichia coli species results in highly diverse adaptive paths.</title>
        <authorList>
            <person name="Touchon M."/>
            <person name="Hoede C."/>
            <person name="Tenaillon O."/>
            <person name="Barbe V."/>
            <person name="Baeriswyl S."/>
            <person name="Bidet P."/>
            <person name="Bingen E."/>
            <person name="Bonacorsi S."/>
            <person name="Bouchier C."/>
            <person name="Bouvet O."/>
            <person name="Calteau A."/>
            <person name="Chiapello H."/>
            <person name="Clermont O."/>
            <person name="Cruveiller S."/>
            <person name="Danchin A."/>
            <person name="Diard M."/>
            <person name="Dossat C."/>
            <person name="Karoui M.E."/>
            <person name="Frapy E."/>
            <person name="Garry L."/>
            <person name="Ghigo J.M."/>
            <person name="Gilles A.M."/>
            <person name="Johnson J."/>
            <person name="Le Bouguenec C."/>
            <person name="Lescat M."/>
            <person name="Mangenot S."/>
            <person name="Martinez-Jehanne V."/>
            <person name="Matic I."/>
            <person name="Nassif X."/>
            <person name="Oztas S."/>
            <person name="Petit M.A."/>
            <person name="Pichon C."/>
            <person name="Rouy Z."/>
            <person name="Ruf C.S."/>
            <person name="Schneider D."/>
            <person name="Tourret J."/>
            <person name="Vacherie B."/>
            <person name="Vallenet D."/>
            <person name="Medigue C."/>
            <person name="Rocha E.P.C."/>
            <person name="Denamur E."/>
        </authorList>
    </citation>
    <scope>NUCLEOTIDE SEQUENCE [LARGE SCALE GENOMIC DNA]</scope>
    <source>
        <strain>IAI39 / ExPEC</strain>
    </source>
</reference>
<evidence type="ECO:0000255" key="1">
    <source>
        <dbReference type="HAMAP-Rule" id="MF_01549"/>
    </source>
</evidence>
<feature type="chain" id="PRO_1000146848" description="Protein DsrB">
    <location>
        <begin position="1"/>
        <end position="62"/>
    </location>
</feature>
<protein>
    <recommendedName>
        <fullName evidence="1">Protein DsrB</fullName>
    </recommendedName>
</protein>
<proteinExistence type="inferred from homology"/>
<accession>B7NRC9</accession>
<comment type="similarity">
    <text evidence="1">Belongs to the DsrB family.</text>
</comment>
<name>DSRB_ECO7I</name>